<keyword id="KW-0963">Cytoplasm</keyword>
<keyword id="KW-0479">Metal-binding</keyword>
<keyword id="KW-1185">Reference proteome</keyword>
<keyword id="KW-0862">Zinc</keyword>
<organism>
    <name type="scientific">Streptococcus agalactiae serotype V (strain ATCC BAA-611 / 2603 V/R)</name>
    <dbReference type="NCBI Taxonomy" id="208435"/>
    <lineage>
        <taxon>Bacteria</taxon>
        <taxon>Bacillati</taxon>
        <taxon>Bacillota</taxon>
        <taxon>Bacilli</taxon>
        <taxon>Lactobacillales</taxon>
        <taxon>Streptococcaceae</taxon>
        <taxon>Streptococcus</taxon>
    </lineage>
</organism>
<sequence>MTNYVKKVSIEDFGCQFLHTAHWNNRLRTTGGRFFPNDRHLDFNPKIYREFGIDIFRKIVRHELCHYHLYIQGKGYQHRDKAFKELLEKVDGLRYTPRVTAVKVNYHHYSCQSCGQVYRRRRRVNLRKFACGYCHGRLIESF</sequence>
<gene>
    <name type="ordered locus">SAG0733</name>
</gene>
<dbReference type="EMBL" id="AE009948">
    <property type="protein sequence ID" value="AAM99620.1"/>
    <property type="molecule type" value="Genomic_DNA"/>
</dbReference>
<dbReference type="RefSeq" id="NP_687748.1">
    <property type="nucleotide sequence ID" value="NC_004116.1"/>
</dbReference>
<dbReference type="STRING" id="208435.SAG0733"/>
<dbReference type="KEGG" id="sag:SAG0733"/>
<dbReference type="PATRIC" id="fig|208435.3.peg.739"/>
<dbReference type="HOGENOM" id="CLU_123820_0_0_9"/>
<dbReference type="OrthoDB" id="9799909at2"/>
<dbReference type="Proteomes" id="UP000000821">
    <property type="component" value="Chromosome"/>
</dbReference>
<dbReference type="GO" id="GO:0005737">
    <property type="term" value="C:cytoplasm"/>
    <property type="evidence" value="ECO:0007669"/>
    <property type="project" value="UniProtKB-SubCell"/>
</dbReference>
<dbReference type="GO" id="GO:0008270">
    <property type="term" value="F:zinc ion binding"/>
    <property type="evidence" value="ECO:0007669"/>
    <property type="project" value="UniProtKB-UniRule"/>
</dbReference>
<dbReference type="GO" id="GO:0006950">
    <property type="term" value="P:response to stress"/>
    <property type="evidence" value="ECO:0007669"/>
    <property type="project" value="UniProtKB-ARBA"/>
</dbReference>
<dbReference type="HAMAP" id="MF_00745">
    <property type="entry name" value="SprT_like"/>
    <property type="match status" value="1"/>
</dbReference>
<dbReference type="InterPro" id="IPR006640">
    <property type="entry name" value="SprT-like_domain"/>
</dbReference>
<dbReference type="InterPro" id="IPR023524">
    <property type="entry name" value="Uncharacterised_SprT-like"/>
</dbReference>
<dbReference type="NCBIfam" id="NF003339">
    <property type="entry name" value="PRK04351.1"/>
    <property type="match status" value="1"/>
</dbReference>
<dbReference type="Pfam" id="PF10263">
    <property type="entry name" value="SprT-like"/>
    <property type="match status" value="1"/>
</dbReference>
<dbReference type="SMART" id="SM00731">
    <property type="entry name" value="SprT"/>
    <property type="match status" value="1"/>
</dbReference>
<comment type="cofactor">
    <cofactor evidence="1">
        <name>Zn(2+)</name>
        <dbReference type="ChEBI" id="CHEBI:29105"/>
    </cofactor>
    <text evidence="1">Binds 1 zinc ion.</text>
</comment>
<comment type="subcellular location">
    <subcellularLocation>
        <location evidence="1">Cytoplasm</location>
    </subcellularLocation>
</comment>
<comment type="similarity">
    <text evidence="1">Belongs to the SprT family.</text>
</comment>
<evidence type="ECO:0000255" key="1">
    <source>
        <dbReference type="HAMAP-Rule" id="MF_00745"/>
    </source>
</evidence>
<feature type="chain" id="PRO_0000213306" description="Protein SprT-like">
    <location>
        <begin position="1"/>
        <end position="142"/>
    </location>
</feature>
<feature type="domain" description="SprT-like" evidence="1">
    <location>
        <begin position="4"/>
        <end position="138"/>
    </location>
</feature>
<feature type="active site" evidence="1">
    <location>
        <position position="63"/>
    </location>
</feature>
<feature type="binding site" evidence="1">
    <location>
        <position position="62"/>
    </location>
    <ligand>
        <name>Zn(2+)</name>
        <dbReference type="ChEBI" id="CHEBI:29105"/>
    </ligand>
</feature>
<feature type="binding site" evidence="1">
    <location>
        <position position="66"/>
    </location>
    <ligand>
        <name>Zn(2+)</name>
        <dbReference type="ChEBI" id="CHEBI:29105"/>
    </ligand>
</feature>
<reference key="1">
    <citation type="journal article" date="2002" name="Proc. Natl. Acad. Sci. U.S.A.">
        <title>Complete genome sequence and comparative genomic analysis of an emerging human pathogen, serotype V Streptococcus agalactiae.</title>
        <authorList>
            <person name="Tettelin H."/>
            <person name="Masignani V."/>
            <person name="Cieslewicz M.J."/>
            <person name="Eisen J.A."/>
            <person name="Peterson S.N."/>
            <person name="Wessels M.R."/>
            <person name="Paulsen I.T."/>
            <person name="Nelson K.E."/>
            <person name="Margarit I."/>
            <person name="Read T.D."/>
            <person name="Madoff L.C."/>
            <person name="Wolf A.M."/>
            <person name="Beanan M.J."/>
            <person name="Brinkac L.M."/>
            <person name="Daugherty S.C."/>
            <person name="DeBoy R.T."/>
            <person name="Durkin A.S."/>
            <person name="Kolonay J.F."/>
            <person name="Madupu R."/>
            <person name="Lewis M.R."/>
            <person name="Radune D."/>
            <person name="Fedorova N.B."/>
            <person name="Scanlan D."/>
            <person name="Khouri H.M."/>
            <person name="Mulligan S."/>
            <person name="Carty H.A."/>
            <person name="Cline R.T."/>
            <person name="Van Aken S.E."/>
            <person name="Gill J."/>
            <person name="Scarselli M."/>
            <person name="Mora M."/>
            <person name="Iacobini E.T."/>
            <person name="Brettoni C."/>
            <person name="Galli G."/>
            <person name="Mariani M."/>
            <person name="Vegni F."/>
            <person name="Maione D."/>
            <person name="Rinaudo D."/>
            <person name="Rappuoli R."/>
            <person name="Telford J.L."/>
            <person name="Kasper D.L."/>
            <person name="Grandi G."/>
            <person name="Fraser C.M."/>
        </authorList>
    </citation>
    <scope>NUCLEOTIDE SEQUENCE [LARGE SCALE GENOMIC DNA]</scope>
    <source>
        <strain>ATCC BAA-611 / 2603 V/R</strain>
    </source>
</reference>
<proteinExistence type="inferred from homology"/>
<protein>
    <recommendedName>
        <fullName evidence="1">Protein SprT-like</fullName>
    </recommendedName>
</protein>
<accession>Q8E0J8</accession>
<name>SPRTL_STRA5</name>